<keyword id="KW-0002">3D-structure</keyword>
<keyword id="KW-0460">Magnesium</keyword>
<keyword id="KW-0547">Nucleotide-binding</keyword>
<keyword id="KW-0548">Nucleotidyltransferase</keyword>
<keyword id="KW-0694">RNA-binding</keyword>
<keyword id="KW-0696">RNA-directed RNA polymerase</keyword>
<keyword id="KW-0808">Transferase</keyword>
<keyword id="KW-0693">Viral RNA replication</keyword>
<keyword id="KW-0946">Virion</keyword>
<name>RDRP_ROTSP</name>
<sequence length="1088" mass="125252">MGKYNLILSEYLSFIYNSQSAVQIPIYYSSNSELENRCIEFHSKCLENSKNGLSLRKLFVEYNDVIENATLLSILSYSYDKYNAVERKLVKYAKGKPLEADLTVNELDYENNKMTSELFPTAEEYTDSLMDPAILTSLSSNLNAVMFWLEKHENDVAEKLKVYKRRLDLFTIVASTINKYGVPRHNAKYRYEYDVMKDKPYYLVTWANSSIEMLMSVFSHDDYLIAKELIVLSYSNRSTLAKLVSSPMSILVALVDINGTFITNEELELEFSNKYVRAIVPDQTFDELNQMLDNMRKAGLVDIPKMIQDWLVDRSIEKFPLMAKIYSWSFHVGFRKQKMLDAALDQLKTEYTENVDDEMYREYTMLIRDEVVKMLEEPVKHDDHLLRDSELAGLLSMSSASNGESRQLKFGRKTIFSTKKNMHVMDDMANERYTPGIIPPVNVDKPIPLGRRDVPGRRTRIIFILPYEYFIAQHAVVEKMLIYAKHTREYAEFYSQSNQLLSYGDVTRFLSNNTMVLYTDVSQWDSSQHNTQPFRKGIIMGLDILANMTNDAKVLQTLNLYKQTQINLMDSYVQIPDGNVIKKIQYGAVASGEKQTKAANSIANLALIKTVLSRISNKHSFATKIIRVDGDDNYAVLQFNTEVTKQMIQDVSNDVRETYARMNAKVKALVSTVGIEIAKRYIAGGKIFFRAGINLLNNEKRGQSTQWDQAAILYSNYIVNRLRGFETDREFILTKIMQMTSVAITGSLRLFPSERVLTTNSTFKVFDSEDFIIEYGTTVDEVYIQRAFMSLSSQKSGIADEIAASSTFKNYVTRLSEQLLFSKNNIVSRGIALTEKAKLNSYAPISLEKRRAQISALLTMLQKPVTFKSSKITINDILRDIKPFFTVSDAHLPIQYQKFMPTLPDNVQYIIQCIGSRTYQIEDDGSKSAISRLISKYSVYKPSIEELYKVISLHENEIQLYLISLGIPKIDADTYVGSKIYSRDKYRILESYVYNLLSINYGCYQLFDFNSPDLEKLIRIPFKGKIPAVTFILHLYAKLEVINYAIKNGSWISLFCNYPKSEMIKLWKKMWNITSLRSPYTNANFFQE</sequence>
<proteinExistence type="evidence at protein level"/>
<protein>
    <recommendedName>
        <fullName>RNA-directed RNA polymerase</fullName>
        <ecNumber>2.7.7.48</ecNumber>
    </recommendedName>
    <alternativeName>
        <fullName>Protein VP1</fullName>
    </alternativeName>
</protein>
<dbReference type="EC" id="2.7.7.48"/>
<dbReference type="EMBL" id="AF015955">
    <property type="protein sequence ID" value="AAC58684.1"/>
    <property type="status" value="ALT_TERM"/>
    <property type="molecule type" value="mRNA"/>
</dbReference>
<dbReference type="PDB" id="2R7O">
    <property type="method" value="X-ray"/>
    <property type="resolution" value="3.35 A"/>
    <property type="chains" value="A=1-1088"/>
</dbReference>
<dbReference type="PDB" id="2R7Q">
    <property type="method" value="X-ray"/>
    <property type="resolution" value="2.90 A"/>
    <property type="chains" value="A=1-1088"/>
</dbReference>
<dbReference type="PDB" id="2R7R">
    <property type="method" value="X-ray"/>
    <property type="resolution" value="2.60 A"/>
    <property type="chains" value="A=1-1088"/>
</dbReference>
<dbReference type="PDB" id="2R7S">
    <property type="method" value="X-ray"/>
    <property type="resolution" value="3.24 A"/>
    <property type="chains" value="A=1-1088"/>
</dbReference>
<dbReference type="PDB" id="2R7T">
    <property type="method" value="X-ray"/>
    <property type="resolution" value="3.00 A"/>
    <property type="chains" value="A=1-1088"/>
</dbReference>
<dbReference type="PDB" id="2R7U">
    <property type="method" value="X-ray"/>
    <property type="resolution" value="3.10 A"/>
    <property type="chains" value="A=1-1088"/>
</dbReference>
<dbReference type="PDB" id="2R7V">
    <property type="method" value="X-ray"/>
    <property type="resolution" value="2.80 A"/>
    <property type="chains" value="A=1-1088"/>
</dbReference>
<dbReference type="PDB" id="2R7W">
    <property type="method" value="X-ray"/>
    <property type="resolution" value="2.60 A"/>
    <property type="chains" value="A=1-1088"/>
</dbReference>
<dbReference type="PDB" id="2R7X">
    <property type="method" value="X-ray"/>
    <property type="resolution" value="2.80 A"/>
    <property type="chains" value="A/B=1-1088"/>
</dbReference>
<dbReference type="PDB" id="4F5X">
    <property type="method" value="X-ray"/>
    <property type="resolution" value="5.00 A"/>
    <property type="chains" value="W=1-1088"/>
</dbReference>
<dbReference type="PDBsum" id="2R7O"/>
<dbReference type="PDBsum" id="2R7Q"/>
<dbReference type="PDBsum" id="2R7R"/>
<dbReference type="PDBsum" id="2R7S"/>
<dbReference type="PDBsum" id="2R7T"/>
<dbReference type="PDBsum" id="2R7U"/>
<dbReference type="PDBsum" id="2R7V"/>
<dbReference type="PDBsum" id="2R7W"/>
<dbReference type="PDBsum" id="2R7X"/>
<dbReference type="PDBsum" id="4F5X"/>
<dbReference type="SMR" id="O37061"/>
<dbReference type="EvolutionaryTrace" id="O37061"/>
<dbReference type="GO" id="GO:0044423">
    <property type="term" value="C:virion component"/>
    <property type="evidence" value="ECO:0007669"/>
    <property type="project" value="UniProtKB-KW"/>
</dbReference>
<dbReference type="GO" id="GO:0000166">
    <property type="term" value="F:nucleotide binding"/>
    <property type="evidence" value="ECO:0007669"/>
    <property type="project" value="UniProtKB-KW"/>
</dbReference>
<dbReference type="GO" id="GO:0003723">
    <property type="term" value="F:RNA binding"/>
    <property type="evidence" value="ECO:0007669"/>
    <property type="project" value="UniProtKB-KW"/>
</dbReference>
<dbReference type="GO" id="GO:0003968">
    <property type="term" value="F:RNA-directed RNA polymerase activity"/>
    <property type="evidence" value="ECO:0007669"/>
    <property type="project" value="UniProtKB-KW"/>
</dbReference>
<dbReference type="GO" id="GO:0006351">
    <property type="term" value="P:DNA-templated transcription"/>
    <property type="evidence" value="ECO:0007669"/>
    <property type="project" value="InterPro"/>
</dbReference>
<dbReference type="GO" id="GO:0019079">
    <property type="term" value="P:viral genome replication"/>
    <property type="evidence" value="ECO:0007669"/>
    <property type="project" value="InterPro"/>
</dbReference>
<dbReference type="Gene3D" id="1.10.357.80">
    <property type="match status" value="2"/>
</dbReference>
<dbReference type="Gene3D" id="1.20.120.1390">
    <property type="match status" value="1"/>
</dbReference>
<dbReference type="Gene3D" id="3.30.230.140">
    <property type="match status" value="2"/>
</dbReference>
<dbReference type="Gene3D" id="3.30.70.2480">
    <property type="match status" value="1"/>
</dbReference>
<dbReference type="Gene3D" id="1.10.10.1990">
    <property type="entry name" value="Viral RNA-directed RNA polymerase, 4-helical domain"/>
    <property type="match status" value="1"/>
</dbReference>
<dbReference type="InterPro" id="IPR043502">
    <property type="entry name" value="DNA/RNA_pol_sf"/>
</dbReference>
<dbReference type="InterPro" id="IPR042032">
    <property type="entry name" value="RNA-dir_pol_4-hel_dom"/>
</dbReference>
<dbReference type="InterPro" id="IPR001795">
    <property type="entry name" value="RNA-dir_pol_luteovirus"/>
</dbReference>
<dbReference type="InterPro" id="IPR007097">
    <property type="entry name" value="RNA-dir_pol_reovirus"/>
</dbReference>
<dbReference type="InterPro" id="IPR022071">
    <property type="entry name" value="Rotavirus_VP1_C"/>
</dbReference>
<dbReference type="Pfam" id="PF02123">
    <property type="entry name" value="RdRP_4"/>
    <property type="match status" value="1"/>
</dbReference>
<dbReference type="Pfam" id="PF12289">
    <property type="entry name" value="Rotavirus_VP1"/>
    <property type="match status" value="1"/>
</dbReference>
<dbReference type="SUPFAM" id="SSF56672">
    <property type="entry name" value="DNA/RNA polymerases"/>
    <property type="match status" value="1"/>
</dbReference>
<dbReference type="PROSITE" id="PS50523">
    <property type="entry name" value="RDRP_DSRNA_REO"/>
    <property type="match status" value="1"/>
</dbReference>
<feature type="chain" id="PRO_0000367812" description="RNA-directed RNA polymerase">
    <location>
        <begin position="1"/>
        <end position="1088"/>
    </location>
</feature>
<feature type="domain" description="RdRp catalytic" evidence="2">
    <location>
        <begin position="501"/>
        <end position="687"/>
    </location>
</feature>
<feature type="helix" evidence="7">
    <location>
        <begin position="4"/>
        <end position="15"/>
    </location>
</feature>
<feature type="strand" evidence="7">
    <location>
        <begin position="23"/>
        <end position="28"/>
    </location>
</feature>
<feature type="helix" evidence="7">
    <location>
        <begin position="32"/>
        <end position="49"/>
    </location>
</feature>
<feature type="turn" evidence="7">
    <location>
        <begin position="50"/>
        <end position="52"/>
    </location>
</feature>
<feature type="helix" evidence="7">
    <location>
        <begin position="58"/>
        <end position="61"/>
    </location>
</feature>
<feature type="helix" evidence="7">
    <location>
        <begin position="63"/>
        <end position="68"/>
    </location>
</feature>
<feature type="strand" evidence="7">
    <location>
        <begin position="69"/>
        <end position="77"/>
    </location>
</feature>
<feature type="helix" evidence="7">
    <location>
        <begin position="85"/>
        <end position="89"/>
    </location>
</feature>
<feature type="helix" evidence="7">
    <location>
        <begin position="90"/>
        <end position="92"/>
    </location>
</feature>
<feature type="helix" evidence="7">
    <location>
        <begin position="108"/>
        <end position="110"/>
    </location>
</feature>
<feature type="helix" evidence="7">
    <location>
        <begin position="115"/>
        <end position="118"/>
    </location>
</feature>
<feature type="turn" evidence="7">
    <location>
        <begin position="122"/>
        <end position="124"/>
    </location>
</feature>
<feature type="turn" evidence="7">
    <location>
        <begin position="128"/>
        <end position="130"/>
    </location>
</feature>
<feature type="strand" evidence="7">
    <location>
        <begin position="134"/>
        <end position="136"/>
    </location>
</feature>
<feature type="helix" evidence="7">
    <location>
        <begin position="138"/>
        <end position="151"/>
    </location>
</feature>
<feature type="turn" evidence="7">
    <location>
        <begin position="152"/>
        <end position="154"/>
    </location>
</feature>
<feature type="helix" evidence="7">
    <location>
        <begin position="157"/>
        <end position="178"/>
    </location>
</feature>
<feature type="helix" evidence="7">
    <location>
        <begin position="193"/>
        <end position="196"/>
    </location>
</feature>
<feature type="helix" evidence="7">
    <location>
        <begin position="203"/>
        <end position="214"/>
    </location>
</feature>
<feature type="helix" evidence="7">
    <location>
        <begin position="220"/>
        <end position="232"/>
    </location>
</feature>
<feature type="turn" evidence="7">
    <location>
        <begin position="233"/>
        <end position="235"/>
    </location>
</feature>
<feature type="strand" evidence="9">
    <location>
        <begin position="237"/>
        <end position="239"/>
    </location>
</feature>
<feature type="helix" evidence="7">
    <location>
        <begin position="240"/>
        <end position="245"/>
    </location>
</feature>
<feature type="helix" evidence="7">
    <location>
        <begin position="248"/>
        <end position="251"/>
    </location>
</feature>
<feature type="turn" evidence="7">
    <location>
        <begin position="252"/>
        <end position="254"/>
    </location>
</feature>
<feature type="strand" evidence="7">
    <location>
        <begin position="257"/>
        <end position="263"/>
    </location>
</feature>
<feature type="strand" evidence="7">
    <location>
        <begin position="269"/>
        <end position="276"/>
    </location>
</feature>
<feature type="helix" evidence="7">
    <location>
        <begin position="282"/>
        <end position="297"/>
    </location>
</feature>
<feature type="helix" evidence="7">
    <location>
        <begin position="302"/>
        <end position="310"/>
    </location>
</feature>
<feature type="turn" evidence="7">
    <location>
        <begin position="311"/>
        <end position="313"/>
    </location>
</feature>
<feature type="turn" evidence="7">
    <location>
        <begin position="316"/>
        <end position="319"/>
    </location>
</feature>
<feature type="helix" evidence="7">
    <location>
        <begin position="320"/>
        <end position="328"/>
    </location>
</feature>
<feature type="helix" evidence="7">
    <location>
        <begin position="329"/>
        <end position="332"/>
    </location>
</feature>
<feature type="helix" evidence="7">
    <location>
        <begin position="339"/>
        <end position="344"/>
    </location>
</feature>
<feature type="helix" evidence="7">
    <location>
        <begin position="361"/>
        <end position="373"/>
    </location>
</feature>
<feature type="helix" evidence="7">
    <location>
        <begin position="376"/>
        <end position="380"/>
    </location>
</feature>
<feature type="helix" evidence="7">
    <location>
        <begin position="384"/>
        <end position="387"/>
    </location>
</feature>
<feature type="helix" evidence="7">
    <location>
        <begin position="389"/>
        <end position="396"/>
    </location>
</feature>
<feature type="strand" evidence="7">
    <location>
        <begin position="399"/>
        <end position="410"/>
    </location>
</feature>
<feature type="strand" evidence="7">
    <location>
        <begin position="413"/>
        <end position="419"/>
    </location>
</feature>
<feature type="helix" evidence="7">
    <location>
        <begin position="420"/>
        <end position="428"/>
    </location>
</feature>
<feature type="turn" evidence="7">
    <location>
        <begin position="429"/>
        <end position="431"/>
    </location>
</feature>
<feature type="strand" evidence="8">
    <location>
        <begin position="442"/>
        <end position="445"/>
    </location>
</feature>
<feature type="strand" evidence="7">
    <location>
        <begin position="447"/>
        <end position="452"/>
    </location>
</feature>
<feature type="strand" evidence="7">
    <location>
        <begin position="455"/>
        <end position="457"/>
    </location>
</feature>
<feature type="strand" evidence="7">
    <location>
        <begin position="460"/>
        <end position="463"/>
    </location>
</feature>
<feature type="helix" evidence="7">
    <location>
        <begin position="468"/>
        <end position="485"/>
    </location>
</feature>
<feature type="turn" evidence="7">
    <location>
        <begin position="491"/>
        <end position="493"/>
    </location>
</feature>
<feature type="helix" evidence="7">
    <location>
        <begin position="499"/>
        <end position="508"/>
    </location>
</feature>
<feature type="strand" evidence="7">
    <location>
        <begin position="514"/>
        <end position="520"/>
    </location>
</feature>
<feature type="helix" evidence="7">
    <location>
        <begin position="522"/>
        <end position="525"/>
    </location>
</feature>
<feature type="helix" evidence="7">
    <location>
        <begin position="528"/>
        <end position="546"/>
    </location>
</feature>
<feature type="helix" evidence="7">
    <location>
        <begin position="552"/>
        <end position="569"/>
    </location>
</feature>
<feature type="strand" evidence="7">
    <location>
        <begin position="571"/>
        <end position="576"/>
    </location>
</feature>
<feature type="strand" evidence="7">
    <location>
        <begin position="578"/>
        <end position="586"/>
    </location>
</feature>
<feature type="strand" evidence="7">
    <location>
        <begin position="593"/>
        <end position="595"/>
    </location>
</feature>
<feature type="helix" evidence="7">
    <location>
        <begin position="596"/>
        <end position="616"/>
    </location>
</feature>
<feature type="strand" evidence="7">
    <location>
        <begin position="622"/>
        <end position="629"/>
    </location>
</feature>
<feature type="strand" evidence="7">
    <location>
        <begin position="632"/>
        <end position="638"/>
    </location>
</feature>
<feature type="helix" evidence="7">
    <location>
        <begin position="645"/>
        <end position="660"/>
    </location>
</feature>
<feature type="turn" evidence="7">
    <location>
        <begin position="661"/>
        <end position="663"/>
    </location>
</feature>
<feature type="strand" evidence="7">
    <location>
        <begin position="667"/>
        <end position="673"/>
    </location>
</feature>
<feature type="strand" evidence="6">
    <location>
        <begin position="675"/>
        <end position="677"/>
    </location>
</feature>
<feature type="strand" evidence="7">
    <location>
        <begin position="681"/>
        <end position="683"/>
    </location>
</feature>
<feature type="strand" evidence="7">
    <location>
        <begin position="686"/>
        <end position="688"/>
    </location>
</feature>
<feature type="strand" evidence="8">
    <location>
        <begin position="695"/>
        <end position="697"/>
    </location>
</feature>
<feature type="helix" evidence="7">
    <location>
        <begin position="706"/>
        <end position="723"/>
    </location>
</feature>
<feature type="helix" evidence="7">
    <location>
        <begin position="729"/>
        <end position="740"/>
    </location>
</feature>
<feature type="strand" evidence="7">
    <location>
        <begin position="742"/>
        <end position="752"/>
    </location>
</feature>
<feature type="helix" evidence="7">
    <location>
        <begin position="754"/>
        <end position="758"/>
    </location>
</feature>
<feature type="strand" evidence="7">
    <location>
        <begin position="759"/>
        <end position="761"/>
    </location>
</feature>
<feature type="helix" evidence="7">
    <location>
        <begin position="779"/>
        <end position="790"/>
    </location>
</feature>
<feature type="helix" evidence="7">
    <location>
        <begin position="797"/>
        <end position="804"/>
    </location>
</feature>
<feature type="helix" evidence="7">
    <location>
        <begin position="806"/>
        <end position="819"/>
    </location>
</feature>
<feature type="helix" evidence="7">
    <location>
        <begin position="826"/>
        <end position="837"/>
    </location>
</feature>
<feature type="helix" evidence="7">
    <location>
        <begin position="838"/>
        <end position="841"/>
    </location>
</feature>
<feature type="helix" evidence="7">
    <location>
        <begin position="843"/>
        <end position="860"/>
    </location>
</feature>
<feature type="helix" evidence="7">
    <location>
        <begin position="874"/>
        <end position="881"/>
    </location>
</feature>
<feature type="helix" evidence="7">
    <location>
        <begin position="882"/>
        <end position="884"/>
    </location>
</feature>
<feature type="strand" evidence="7">
    <location>
        <begin position="885"/>
        <end position="890"/>
    </location>
</feature>
<feature type="helix" evidence="7">
    <location>
        <begin position="905"/>
        <end position="914"/>
    </location>
</feature>
<feature type="helix" evidence="7">
    <location>
        <begin position="929"/>
        <end position="937"/>
    </location>
</feature>
<feature type="helix" evidence="7">
    <location>
        <begin position="944"/>
        <end position="951"/>
    </location>
</feature>
<feature type="helix" evidence="7">
    <location>
        <begin position="955"/>
        <end position="964"/>
    </location>
</feature>
<feature type="helix" evidence="7">
    <location>
        <begin position="969"/>
        <end position="975"/>
    </location>
</feature>
<feature type="helix" evidence="7">
    <location>
        <begin position="979"/>
        <end position="996"/>
    </location>
</feature>
<feature type="turn" evidence="7">
    <location>
        <begin position="997"/>
        <end position="1000"/>
    </location>
</feature>
<feature type="turn" evidence="7">
    <location>
        <begin position="1002"/>
        <end position="1006"/>
    </location>
</feature>
<feature type="helix" evidence="7">
    <location>
        <begin position="1012"/>
        <end position="1016"/>
    </location>
</feature>
<feature type="helix" evidence="7">
    <location>
        <begin position="1027"/>
        <end position="1048"/>
    </location>
</feature>
<feature type="strand" evidence="7">
    <location>
        <begin position="1049"/>
        <end position="1056"/>
    </location>
</feature>
<feature type="helix" evidence="7">
    <location>
        <begin position="1060"/>
        <end position="1070"/>
    </location>
</feature>
<feature type="helix" evidence="7">
    <location>
        <begin position="1079"/>
        <end position="1087"/>
    </location>
</feature>
<evidence type="ECO:0000250" key="1"/>
<evidence type="ECO:0000255" key="2">
    <source>
        <dbReference type="PROSITE-ProRule" id="PRU00539"/>
    </source>
</evidence>
<evidence type="ECO:0000269" key="3">
    <source>
    </source>
</evidence>
<evidence type="ECO:0000269" key="4">
    <source>
    </source>
</evidence>
<evidence type="ECO:0000305" key="5"/>
<evidence type="ECO:0007829" key="6">
    <source>
        <dbReference type="PDB" id="2R7Q"/>
    </source>
</evidence>
<evidence type="ECO:0007829" key="7">
    <source>
        <dbReference type="PDB" id="2R7R"/>
    </source>
</evidence>
<evidence type="ECO:0007829" key="8">
    <source>
        <dbReference type="PDB" id="2R7V"/>
    </source>
</evidence>
<evidence type="ECO:0007829" key="9">
    <source>
        <dbReference type="PDB" id="2R7X"/>
    </source>
</evidence>
<organism>
    <name type="scientific">Rotavirus A (strain RVA/SA11-Patton/G3P[X])</name>
    <name type="common">RV-A</name>
    <name type="synonym">Simian Agent 11 (strain Patton)</name>
    <dbReference type="NCBI Taxonomy" id="36434"/>
    <lineage>
        <taxon>Viruses</taxon>
        <taxon>Riboviria</taxon>
        <taxon>Orthornavirae</taxon>
        <taxon>Duplornaviricota</taxon>
        <taxon>Resentoviricetes</taxon>
        <taxon>Reovirales</taxon>
        <taxon>Sedoreoviridae</taxon>
        <taxon>Rotavirus</taxon>
        <taxon>Rotavirus A</taxon>
    </lineage>
</organism>
<organismHost>
    <name type="scientific">Macaca mulatta</name>
    <name type="common">Rhesus macaque</name>
    <dbReference type="NCBI Taxonomy" id="9544"/>
</organismHost>
<reference key="1">
    <citation type="journal article" date="1997" name="J. Virol.">
        <title>Rotavirus RNA polymerase requires the core shell protein to synthesize the double-stranded RNA genome.</title>
        <authorList>
            <person name="Patton J.T."/>
            <person name="Jones M.T."/>
            <person name="Kalbach A.N."/>
            <person name="He Y.-W."/>
            <person name="Xiaobo J."/>
        </authorList>
    </citation>
    <scope>NUCLEOTIDE SEQUENCE [MRNA]</scope>
    <scope>FUNCTION</scope>
</reference>
<reference key="2">
    <citation type="journal article" date="1994" name="Virology">
        <title>The rotavirus RNA-binding protein NS35 (NSP2) forms 10S multimers and interacts with the viral RNA polymerase.</title>
        <authorList>
            <person name="Kattoura M.D."/>
            <person name="Chen X."/>
            <person name="Patton J.T."/>
        </authorList>
    </citation>
    <scope>INTERACTION WITH NSP2</scope>
</reference>
<reference key="3">
    <citation type="journal article" date="2008" name="Structure">
        <title>Mechanism for coordinated RNA packaging and genome replication by rotavirus polymerase VP1.</title>
        <authorList>
            <person name="Lu X."/>
            <person name="McDonald S.M."/>
            <person name="Tortorici M.A."/>
            <person name="Tao Y.J."/>
            <person name="Vasquez-Del Carpio R."/>
            <person name="Nibert M.L."/>
            <person name="Patton J.T."/>
            <person name="Harrison S.C."/>
        </authorList>
    </citation>
    <scope>X-RAY CRYSTALLOGRAPHY (2.6 ANGSTROMS)</scope>
    <scope>COFACTOR</scope>
    <scope>FUNCTION</scope>
</reference>
<accession>O37061</accession>
<comment type="function">
    <text evidence="2 3 4">RNA-directed RNA polymerase that is involved in both transcription and genome replication. Together with VP3 capping enzyme, forms an enzyme complex positioned near the channels situated at each of the five-fold vertices of the core. Following infection, the outermost layer of the virus is lost, leaving a double-layered particle (DLP) made up of the core and VP6 shell. VP1 then catalyzes the transcription of fully conservative plus-strand genomic RNAs that are extruded through the DLP's channels into the cytoplasm where they function as mRNAs for translation of viral proteins. One copy of each of the viral (+)RNAs is also recruited during core assembly, together with newly synthesized polymerase complexes and VP2. The polymerase of these novo-formed particles catalyzes the synthesis of complementary minus-strands leading to dsRNA formation. To do so, the polymerase specifically recognizes and binds 4 bases 5'-UGUG-3' in the conserved 3'-sequence of plus-strand RNA templates. VP2 presumably activates the autoinhibited VP1-RNA complex to coordinate packaging and genome replication. Once dsRNA synthesis is complete, the polymerase switches to the transcriptional mode, thus providing secondary transcription.</text>
</comment>
<comment type="catalytic activity">
    <reaction evidence="2">
        <text>RNA(n) + a ribonucleoside 5'-triphosphate = RNA(n+1) + diphosphate</text>
        <dbReference type="Rhea" id="RHEA:21248"/>
        <dbReference type="Rhea" id="RHEA-COMP:14527"/>
        <dbReference type="Rhea" id="RHEA-COMP:17342"/>
        <dbReference type="ChEBI" id="CHEBI:33019"/>
        <dbReference type="ChEBI" id="CHEBI:61557"/>
        <dbReference type="ChEBI" id="CHEBI:140395"/>
        <dbReference type="EC" id="2.7.7.48"/>
    </reaction>
</comment>
<comment type="cofactor">
    <cofactor evidence="5">
        <name>Mg(2+)</name>
        <dbReference type="ChEBI" id="CHEBI:18420"/>
    </cofactor>
</comment>
<comment type="subunit">
    <text evidence="1 5">Interacts with VP3 (Potential). Interacts with VP2; this interaction activates VP1. Interacts with NSP5; this interaction is probably necessary for the formation of functional virus factories. Interacts with NSP2; this interaction is weak (By similarity).</text>
</comment>
<comment type="subcellular location">
    <subcellularLocation>
        <location evidence="5">Virion</location>
    </subcellularLocation>
    <text evidence="1">Attached inside the inner capsid as a minor component. Also found in spherical cytoplasmic structures, called virus factories, that appear early after infection and are the site of viral replication and packaging (By similarity).</text>
</comment>
<comment type="similarity">
    <text evidence="5">Belongs to the reoviridae RNA-directed RNA polymerase family.</text>
</comment>